<keyword id="KW-0004">4Fe-4S</keyword>
<keyword id="KW-0227">DNA damage</keyword>
<keyword id="KW-0234">DNA repair</keyword>
<keyword id="KW-0238">DNA-binding</keyword>
<keyword id="KW-0326">Glycosidase</keyword>
<keyword id="KW-0378">Hydrolase</keyword>
<keyword id="KW-0408">Iron</keyword>
<keyword id="KW-0411">Iron-sulfur</keyword>
<keyword id="KW-0456">Lyase</keyword>
<keyword id="KW-0479">Metal-binding</keyword>
<keyword id="KW-1185">Reference proteome</keyword>
<name>END3_THEMA</name>
<comment type="function">
    <text evidence="1">DNA repair enzyme that has both DNA N-glycosylase activity and AP-lyase activity. The DNA N-glycosylase activity releases various damaged pyrimidines from DNA by cleaving the N-glycosidic bond, leaving an AP (apurinic/apyrimidinic) site. The AP-lyase activity cleaves the phosphodiester bond 3' to the AP site by a beta-elimination, leaving a 3'-terminal unsaturated sugar and a product with a terminal 5'-phosphate.</text>
</comment>
<comment type="catalytic activity">
    <reaction evidence="1">
        <text>2'-deoxyribonucleotide-(2'-deoxyribose 5'-phosphate)-2'-deoxyribonucleotide-DNA = a 3'-end 2'-deoxyribonucleotide-(2,3-dehydro-2,3-deoxyribose 5'-phosphate)-DNA + a 5'-end 5'-phospho-2'-deoxyribonucleoside-DNA + H(+)</text>
        <dbReference type="Rhea" id="RHEA:66592"/>
        <dbReference type="Rhea" id="RHEA-COMP:13180"/>
        <dbReference type="Rhea" id="RHEA-COMP:16897"/>
        <dbReference type="Rhea" id="RHEA-COMP:17067"/>
        <dbReference type="ChEBI" id="CHEBI:15378"/>
        <dbReference type="ChEBI" id="CHEBI:136412"/>
        <dbReference type="ChEBI" id="CHEBI:157695"/>
        <dbReference type="ChEBI" id="CHEBI:167181"/>
        <dbReference type="EC" id="4.2.99.18"/>
    </reaction>
</comment>
<comment type="cofactor">
    <cofactor evidence="1">
        <name>[4Fe-4S] cluster</name>
        <dbReference type="ChEBI" id="CHEBI:49883"/>
    </cofactor>
    <text evidence="1">Binds 1 [4Fe-4S] cluster.</text>
</comment>
<comment type="similarity">
    <text evidence="1">Belongs to the Nth/MutY family.</text>
</comment>
<evidence type="ECO:0000255" key="1">
    <source>
        <dbReference type="HAMAP-Rule" id="MF_00942"/>
    </source>
</evidence>
<sequence>MIEELAREIVKRFPRNHKETDPFRVLISTVLSQRTRDENTEKASKKLFEVYRTPQELAKAKPEDLYDLIKESGMYRQKAERIVEISRILVEKYGGRVPDSLEELLKLPGVGRKTANIVLWVGFKKPALAVDTHVHRISNRLGWVKTRTPEETEEALKKLLPEDLWGPINGSMVEFGRRICKPQNPLCEECFLKNHCEFYRRRGKGEVRNRTER</sequence>
<gene>
    <name evidence="1" type="primary">nth</name>
    <name type="ordered locus">TM_0366</name>
</gene>
<feature type="chain" id="PRO_0000102224" description="Endonuclease III">
    <location>
        <begin position="1"/>
        <end position="213"/>
    </location>
</feature>
<feature type="domain" description="HhH" evidence="1">
    <location>
        <begin position="101"/>
        <end position="120"/>
    </location>
</feature>
<feature type="binding site" evidence="1">
    <location>
        <position position="180"/>
    </location>
    <ligand>
        <name>[4Fe-4S] cluster</name>
        <dbReference type="ChEBI" id="CHEBI:49883"/>
    </ligand>
</feature>
<feature type="binding site" evidence="1">
    <location>
        <position position="187"/>
    </location>
    <ligand>
        <name>[4Fe-4S] cluster</name>
        <dbReference type="ChEBI" id="CHEBI:49883"/>
    </ligand>
</feature>
<feature type="binding site" evidence="1">
    <location>
        <position position="190"/>
    </location>
    <ligand>
        <name>[4Fe-4S] cluster</name>
        <dbReference type="ChEBI" id="CHEBI:49883"/>
    </ligand>
</feature>
<feature type="binding site" evidence="1">
    <location>
        <position position="196"/>
    </location>
    <ligand>
        <name>[4Fe-4S] cluster</name>
        <dbReference type="ChEBI" id="CHEBI:49883"/>
    </ligand>
</feature>
<accession>Q9WYK0</accession>
<dbReference type="EC" id="4.2.99.18" evidence="1"/>
<dbReference type="EMBL" id="AE000512">
    <property type="protein sequence ID" value="AAD35453.1"/>
    <property type="molecule type" value="Genomic_DNA"/>
</dbReference>
<dbReference type="PIR" id="F72387">
    <property type="entry name" value="F72387"/>
</dbReference>
<dbReference type="RefSeq" id="NP_228177.1">
    <property type="nucleotide sequence ID" value="NC_000853.1"/>
</dbReference>
<dbReference type="RefSeq" id="WP_004083173.1">
    <property type="nucleotide sequence ID" value="NZ_CP011107.1"/>
</dbReference>
<dbReference type="SMR" id="Q9WYK0"/>
<dbReference type="FunCoup" id="Q9WYK0">
    <property type="interactions" value="312"/>
</dbReference>
<dbReference type="STRING" id="243274.TM_0366"/>
<dbReference type="PaxDb" id="243274-THEMA_02885"/>
<dbReference type="EnsemblBacteria" id="AAD35453">
    <property type="protein sequence ID" value="AAD35453"/>
    <property type="gene ID" value="TM_0366"/>
</dbReference>
<dbReference type="KEGG" id="tma:TM0366"/>
<dbReference type="KEGG" id="tmi:THEMA_02885"/>
<dbReference type="KEGG" id="tmm:Tmari_0364"/>
<dbReference type="KEGG" id="tmw:THMA_0374"/>
<dbReference type="eggNOG" id="COG0177">
    <property type="taxonomic scope" value="Bacteria"/>
</dbReference>
<dbReference type="InParanoid" id="Q9WYK0"/>
<dbReference type="OrthoDB" id="9800977at2"/>
<dbReference type="Proteomes" id="UP000008183">
    <property type="component" value="Chromosome"/>
</dbReference>
<dbReference type="GO" id="GO:0051539">
    <property type="term" value="F:4 iron, 4 sulfur cluster binding"/>
    <property type="evidence" value="ECO:0007669"/>
    <property type="project" value="UniProtKB-UniRule"/>
</dbReference>
<dbReference type="GO" id="GO:0140078">
    <property type="term" value="F:class I DNA-(apurinic or apyrimidinic site) endonuclease activity"/>
    <property type="evidence" value="ECO:0007669"/>
    <property type="project" value="UniProtKB-EC"/>
</dbReference>
<dbReference type="GO" id="GO:0003677">
    <property type="term" value="F:DNA binding"/>
    <property type="evidence" value="ECO:0007669"/>
    <property type="project" value="UniProtKB-UniRule"/>
</dbReference>
<dbReference type="GO" id="GO:0003906">
    <property type="term" value="F:DNA-(apurinic or apyrimidinic site) endonuclease activity"/>
    <property type="evidence" value="ECO:0000318"/>
    <property type="project" value="GO_Central"/>
</dbReference>
<dbReference type="GO" id="GO:0046872">
    <property type="term" value="F:metal ion binding"/>
    <property type="evidence" value="ECO:0007669"/>
    <property type="project" value="UniProtKB-KW"/>
</dbReference>
<dbReference type="GO" id="GO:0000703">
    <property type="term" value="F:oxidized pyrimidine nucleobase lesion DNA N-glycosylase activity"/>
    <property type="evidence" value="ECO:0000318"/>
    <property type="project" value="GO_Central"/>
</dbReference>
<dbReference type="GO" id="GO:0006285">
    <property type="term" value="P:base-excision repair, AP site formation"/>
    <property type="evidence" value="ECO:0000318"/>
    <property type="project" value="GO_Central"/>
</dbReference>
<dbReference type="GO" id="GO:0006289">
    <property type="term" value="P:nucleotide-excision repair"/>
    <property type="evidence" value="ECO:0000318"/>
    <property type="project" value="GO_Central"/>
</dbReference>
<dbReference type="CDD" id="cd00056">
    <property type="entry name" value="ENDO3c"/>
    <property type="match status" value="1"/>
</dbReference>
<dbReference type="FunFam" id="1.10.1670.10:FF:000001">
    <property type="entry name" value="Endonuclease III"/>
    <property type="match status" value="1"/>
</dbReference>
<dbReference type="FunFam" id="1.10.340.30:FF:000001">
    <property type="entry name" value="Endonuclease III"/>
    <property type="match status" value="1"/>
</dbReference>
<dbReference type="Gene3D" id="1.10.1670.10">
    <property type="entry name" value="Helix-hairpin-Helix base-excision DNA repair enzymes (C-terminal)"/>
    <property type="match status" value="1"/>
</dbReference>
<dbReference type="Gene3D" id="1.10.340.30">
    <property type="entry name" value="Hypothetical protein, domain 2"/>
    <property type="match status" value="1"/>
</dbReference>
<dbReference type="HAMAP" id="MF_00942">
    <property type="entry name" value="Nth"/>
    <property type="match status" value="1"/>
</dbReference>
<dbReference type="InterPro" id="IPR011257">
    <property type="entry name" value="DNA_glycosylase"/>
</dbReference>
<dbReference type="InterPro" id="IPR004036">
    <property type="entry name" value="Endonuclease-III-like_CS2"/>
</dbReference>
<dbReference type="InterPro" id="IPR003651">
    <property type="entry name" value="Endonuclease3_FeS-loop_motif"/>
</dbReference>
<dbReference type="InterPro" id="IPR004035">
    <property type="entry name" value="Endouclease-III_FeS-bd_BS"/>
</dbReference>
<dbReference type="InterPro" id="IPR003265">
    <property type="entry name" value="HhH-GPD_domain"/>
</dbReference>
<dbReference type="InterPro" id="IPR023170">
    <property type="entry name" value="HhH_base_excis_C"/>
</dbReference>
<dbReference type="InterPro" id="IPR000445">
    <property type="entry name" value="HhH_motif"/>
</dbReference>
<dbReference type="InterPro" id="IPR005759">
    <property type="entry name" value="Nth"/>
</dbReference>
<dbReference type="NCBIfam" id="TIGR01083">
    <property type="entry name" value="nth"/>
    <property type="match status" value="1"/>
</dbReference>
<dbReference type="PANTHER" id="PTHR43286">
    <property type="entry name" value="ENDONUCLEASE III-LIKE PROTEIN 1"/>
    <property type="match status" value="1"/>
</dbReference>
<dbReference type="PANTHER" id="PTHR43286:SF1">
    <property type="entry name" value="ENDONUCLEASE III-LIKE PROTEIN 1"/>
    <property type="match status" value="1"/>
</dbReference>
<dbReference type="Pfam" id="PF10576">
    <property type="entry name" value="EndIII_4Fe-2S"/>
    <property type="match status" value="1"/>
</dbReference>
<dbReference type="Pfam" id="PF00633">
    <property type="entry name" value="HHH"/>
    <property type="match status" value="1"/>
</dbReference>
<dbReference type="Pfam" id="PF00730">
    <property type="entry name" value="HhH-GPD"/>
    <property type="match status" value="1"/>
</dbReference>
<dbReference type="PIRSF" id="PIRSF001435">
    <property type="entry name" value="Nth"/>
    <property type="match status" value="1"/>
</dbReference>
<dbReference type="SMART" id="SM00478">
    <property type="entry name" value="ENDO3c"/>
    <property type="match status" value="1"/>
</dbReference>
<dbReference type="SMART" id="SM00525">
    <property type="entry name" value="FES"/>
    <property type="match status" value="1"/>
</dbReference>
<dbReference type="SUPFAM" id="SSF48150">
    <property type="entry name" value="DNA-glycosylase"/>
    <property type="match status" value="1"/>
</dbReference>
<dbReference type="PROSITE" id="PS00764">
    <property type="entry name" value="ENDONUCLEASE_III_1"/>
    <property type="match status" value="1"/>
</dbReference>
<dbReference type="PROSITE" id="PS01155">
    <property type="entry name" value="ENDONUCLEASE_III_2"/>
    <property type="match status" value="1"/>
</dbReference>
<reference key="1">
    <citation type="journal article" date="1999" name="Nature">
        <title>Evidence for lateral gene transfer between Archaea and Bacteria from genome sequence of Thermotoga maritima.</title>
        <authorList>
            <person name="Nelson K.E."/>
            <person name="Clayton R.A."/>
            <person name="Gill S.R."/>
            <person name="Gwinn M.L."/>
            <person name="Dodson R.J."/>
            <person name="Haft D.H."/>
            <person name="Hickey E.K."/>
            <person name="Peterson J.D."/>
            <person name="Nelson W.C."/>
            <person name="Ketchum K.A."/>
            <person name="McDonald L.A."/>
            <person name="Utterback T.R."/>
            <person name="Malek J.A."/>
            <person name="Linher K.D."/>
            <person name="Garrett M.M."/>
            <person name="Stewart A.M."/>
            <person name="Cotton M.D."/>
            <person name="Pratt M.S."/>
            <person name="Phillips C.A."/>
            <person name="Richardson D.L."/>
            <person name="Heidelberg J.F."/>
            <person name="Sutton G.G."/>
            <person name="Fleischmann R.D."/>
            <person name="Eisen J.A."/>
            <person name="White O."/>
            <person name="Salzberg S.L."/>
            <person name="Smith H.O."/>
            <person name="Venter J.C."/>
            <person name="Fraser C.M."/>
        </authorList>
    </citation>
    <scope>NUCLEOTIDE SEQUENCE [LARGE SCALE GENOMIC DNA]</scope>
    <source>
        <strain>ATCC 43589 / DSM 3109 / JCM 10099 / NBRC 100826 / MSB8</strain>
    </source>
</reference>
<protein>
    <recommendedName>
        <fullName evidence="1">Endonuclease III</fullName>
        <ecNumber evidence="1">4.2.99.18</ecNumber>
    </recommendedName>
    <alternativeName>
        <fullName evidence="1">DNA-(apurinic or apyrimidinic site) lyase</fullName>
    </alternativeName>
</protein>
<organism>
    <name type="scientific">Thermotoga maritima (strain ATCC 43589 / DSM 3109 / JCM 10099 / NBRC 100826 / MSB8)</name>
    <dbReference type="NCBI Taxonomy" id="243274"/>
    <lineage>
        <taxon>Bacteria</taxon>
        <taxon>Thermotogati</taxon>
        <taxon>Thermotogota</taxon>
        <taxon>Thermotogae</taxon>
        <taxon>Thermotogales</taxon>
        <taxon>Thermotogaceae</taxon>
        <taxon>Thermotoga</taxon>
    </lineage>
</organism>
<proteinExistence type="inferred from homology"/>